<comment type="subcellular location">
    <subcellularLocation>
        <location evidence="6">Membrane</location>
        <topology evidence="6">Multi-pass membrane protein</topology>
    </subcellularLocation>
    <subcellularLocation>
        <location evidence="2">Cytoplasm</location>
        <location evidence="2">Perinuclear region</location>
    </subcellularLocation>
</comment>
<comment type="alternative products">
    <event type="alternative splicing"/>
    <isoform>
        <id>Q05B54-1</id>
        <name>1</name>
        <sequence type="displayed"/>
    </isoform>
    <isoform>
        <id>Q05B54-2</id>
        <name>2</name>
        <sequence type="described" ref="VSP_023451"/>
    </isoform>
</comment>
<comment type="similarity">
    <text evidence="6">Belongs to the TMEM134/TMEM230 family.</text>
</comment>
<proteinExistence type="evidence at transcript level"/>
<sequence length="195" mass="21567">MSASRPQFSIDDAFELSLEDTGPGLEPSGVARFGPLHFERRARFEVADEDKQSRLRYQNLENDEDGAQASPEPDGGVSSRDSGQTSIRSSQWSFSSISSSTQRSYNACCSWTQHPLIQKNHRVVLASFLLLLLGLVLILTGVGLEVAPSPGVSSAIFFVPGFLLLVPGVYHVIFIYCAVKGHRGFQFFYLPYFEK</sequence>
<gene>
    <name type="primary">TMEM134</name>
</gene>
<dbReference type="EMBL" id="CR849934">
    <property type="status" value="NOT_ANNOTATED_CDS"/>
    <property type="molecule type" value="mRNA"/>
</dbReference>
<dbReference type="EMBL" id="BC122796">
    <property type="protein sequence ID" value="AAI22797.1"/>
    <property type="molecule type" value="mRNA"/>
</dbReference>
<dbReference type="RefSeq" id="NP_001073723.1">
    <molecule id="Q05B54-2"/>
    <property type="nucleotide sequence ID" value="NM_001080254.2"/>
</dbReference>
<dbReference type="RefSeq" id="XP_005227098.1">
    <property type="nucleotide sequence ID" value="XM_005227041.2"/>
</dbReference>
<dbReference type="FunCoup" id="Q05B54">
    <property type="interactions" value="859"/>
</dbReference>
<dbReference type="PaxDb" id="9913-ENSBTAP00000029961"/>
<dbReference type="GeneID" id="510129"/>
<dbReference type="KEGG" id="bta:510129"/>
<dbReference type="CTD" id="80194"/>
<dbReference type="eggNOG" id="KOG4753">
    <property type="taxonomic scope" value="Eukaryota"/>
</dbReference>
<dbReference type="HOGENOM" id="CLU_120539_0_0_1"/>
<dbReference type="InParanoid" id="Q05B54"/>
<dbReference type="OrthoDB" id="10048380at2759"/>
<dbReference type="TreeFam" id="TF323560"/>
<dbReference type="Proteomes" id="UP000009136">
    <property type="component" value="Unplaced"/>
</dbReference>
<dbReference type="GO" id="GO:0016020">
    <property type="term" value="C:membrane"/>
    <property type="evidence" value="ECO:0007669"/>
    <property type="project" value="UniProtKB-SubCell"/>
</dbReference>
<dbReference type="GO" id="GO:0048471">
    <property type="term" value="C:perinuclear region of cytoplasm"/>
    <property type="evidence" value="ECO:0007669"/>
    <property type="project" value="UniProtKB-SubCell"/>
</dbReference>
<dbReference type="InterPro" id="IPR039714">
    <property type="entry name" value="TMEM134"/>
</dbReference>
<dbReference type="InterPro" id="IPR008590">
    <property type="entry name" value="TMEM_230/134"/>
</dbReference>
<dbReference type="PANTHER" id="PTHR13558">
    <property type="entry name" value="TRANSMEMBRANE PROTEIN 134"/>
    <property type="match status" value="1"/>
</dbReference>
<dbReference type="PANTHER" id="PTHR13558:SF1">
    <property type="entry name" value="TRANSMEMBRANE PROTEIN 134"/>
    <property type="match status" value="1"/>
</dbReference>
<dbReference type="Pfam" id="PF05915">
    <property type="entry name" value="TMEM_230_134"/>
    <property type="match status" value="1"/>
</dbReference>
<organism>
    <name type="scientific">Bos taurus</name>
    <name type="common">Bovine</name>
    <dbReference type="NCBI Taxonomy" id="9913"/>
    <lineage>
        <taxon>Eukaryota</taxon>
        <taxon>Metazoa</taxon>
        <taxon>Chordata</taxon>
        <taxon>Craniata</taxon>
        <taxon>Vertebrata</taxon>
        <taxon>Euteleostomi</taxon>
        <taxon>Mammalia</taxon>
        <taxon>Eutheria</taxon>
        <taxon>Laurasiatheria</taxon>
        <taxon>Artiodactyla</taxon>
        <taxon>Ruminantia</taxon>
        <taxon>Pecora</taxon>
        <taxon>Bovidae</taxon>
        <taxon>Bovinae</taxon>
        <taxon>Bos</taxon>
    </lineage>
</organism>
<feature type="chain" id="PRO_0000279484" description="Transmembrane protein 134">
    <location>
        <begin position="1"/>
        <end position="195"/>
    </location>
</feature>
<feature type="topological domain" description="Cytoplasmic" evidence="3">
    <location>
        <begin position="1"/>
        <end position="122"/>
    </location>
</feature>
<feature type="transmembrane region" description="Helical" evidence="3">
    <location>
        <begin position="123"/>
        <end position="143"/>
    </location>
</feature>
<feature type="topological domain" description="Extracellular" evidence="3">
    <location>
        <begin position="144"/>
        <end position="154"/>
    </location>
</feature>
<feature type="transmembrane region" description="Helical" evidence="3">
    <location>
        <begin position="155"/>
        <end position="175"/>
    </location>
</feature>
<feature type="topological domain" description="Cytoplasmic" evidence="3">
    <location>
        <begin position="176"/>
        <end position="195"/>
    </location>
</feature>
<feature type="region of interest" description="Disordered" evidence="4">
    <location>
        <begin position="60"/>
        <end position="91"/>
    </location>
</feature>
<feature type="modified residue" description="Phosphoserine" evidence="1">
    <location>
        <position position="93"/>
    </location>
</feature>
<feature type="splice variant" id="VSP_023451" description="In isoform 2." evidence="5">
    <location>
        <begin position="136"/>
        <end position="150"/>
    </location>
</feature>
<feature type="sequence conflict" description="In Ref. 1; CR849934." evidence="6" ref="1">
    <original>E</original>
    <variation>V</variation>
    <location>
        <position position="194"/>
    </location>
</feature>
<reference key="1">
    <citation type="submission" date="2004-10" db="EMBL/GenBank/DDBJ databases">
        <title>Endometrium ESTs (bcbp).</title>
        <authorList>
            <person name="Renard J.P."/>
            <person name="Lewin H.A."/>
            <person name="Yang J."/>
            <person name="Hernandez A."/>
            <person name="Sandra O."/>
            <person name="Everts R.E."/>
            <person name="Hue I."/>
        </authorList>
    </citation>
    <scope>NUCLEOTIDE SEQUENCE [MRNA] (ISOFORM 1)</scope>
    <source>
        <tissue>Endometrium</tissue>
    </source>
</reference>
<reference key="2">
    <citation type="submission" date="2006-08" db="EMBL/GenBank/DDBJ databases">
        <authorList>
            <consortium name="NIH - Mammalian Gene Collection (MGC) project"/>
        </authorList>
    </citation>
    <scope>NUCLEOTIDE SEQUENCE [LARGE SCALE MRNA] (ISOFORM 2)</scope>
    <source>
        <strain>Hereford</strain>
        <tissue>Hypothalamus</tissue>
    </source>
</reference>
<name>TM134_BOVIN</name>
<evidence type="ECO:0000250" key="1">
    <source>
        <dbReference type="UniProtKB" id="Q8R0J4"/>
    </source>
</evidence>
<evidence type="ECO:0000250" key="2">
    <source>
        <dbReference type="UniProtKB" id="Q9H6X4"/>
    </source>
</evidence>
<evidence type="ECO:0000255" key="3"/>
<evidence type="ECO:0000256" key="4">
    <source>
        <dbReference type="SAM" id="MobiDB-lite"/>
    </source>
</evidence>
<evidence type="ECO:0000303" key="5">
    <source ref="2"/>
</evidence>
<evidence type="ECO:0000305" key="6"/>
<keyword id="KW-0025">Alternative splicing</keyword>
<keyword id="KW-0963">Cytoplasm</keyword>
<keyword id="KW-0472">Membrane</keyword>
<keyword id="KW-0597">Phosphoprotein</keyword>
<keyword id="KW-1185">Reference proteome</keyword>
<keyword id="KW-0812">Transmembrane</keyword>
<keyword id="KW-1133">Transmembrane helix</keyword>
<accession>Q05B54</accession>
<protein>
    <recommendedName>
        <fullName>Transmembrane protein 134</fullName>
    </recommendedName>
</protein>